<dbReference type="EC" id="2.1.2.1" evidence="1"/>
<dbReference type="EMBL" id="AP009049">
    <property type="protein sequence ID" value="BAH06231.1"/>
    <property type="molecule type" value="Genomic_DNA"/>
</dbReference>
<dbReference type="RefSeq" id="WP_012101671.1">
    <property type="nucleotide sequence ID" value="NC_011837.1"/>
</dbReference>
<dbReference type="SMR" id="B9E156"/>
<dbReference type="KEGG" id="ckr:CKR_1180"/>
<dbReference type="HOGENOM" id="CLU_022477_2_1_9"/>
<dbReference type="UniPathway" id="UPA00193"/>
<dbReference type="UniPathway" id="UPA00288">
    <property type="reaction ID" value="UER01023"/>
</dbReference>
<dbReference type="Proteomes" id="UP000007969">
    <property type="component" value="Chromosome"/>
</dbReference>
<dbReference type="GO" id="GO:0005829">
    <property type="term" value="C:cytosol"/>
    <property type="evidence" value="ECO:0007669"/>
    <property type="project" value="TreeGrafter"/>
</dbReference>
<dbReference type="GO" id="GO:0004372">
    <property type="term" value="F:glycine hydroxymethyltransferase activity"/>
    <property type="evidence" value="ECO:0007669"/>
    <property type="project" value="UniProtKB-UniRule"/>
</dbReference>
<dbReference type="GO" id="GO:0030170">
    <property type="term" value="F:pyridoxal phosphate binding"/>
    <property type="evidence" value="ECO:0007669"/>
    <property type="project" value="UniProtKB-UniRule"/>
</dbReference>
<dbReference type="GO" id="GO:0019264">
    <property type="term" value="P:glycine biosynthetic process from serine"/>
    <property type="evidence" value="ECO:0007669"/>
    <property type="project" value="UniProtKB-UniRule"/>
</dbReference>
<dbReference type="GO" id="GO:0035999">
    <property type="term" value="P:tetrahydrofolate interconversion"/>
    <property type="evidence" value="ECO:0007669"/>
    <property type="project" value="UniProtKB-UniRule"/>
</dbReference>
<dbReference type="CDD" id="cd00378">
    <property type="entry name" value="SHMT"/>
    <property type="match status" value="1"/>
</dbReference>
<dbReference type="FunFam" id="3.40.640.10:FF:000001">
    <property type="entry name" value="Serine hydroxymethyltransferase"/>
    <property type="match status" value="1"/>
</dbReference>
<dbReference type="FunFam" id="3.90.1150.10:FF:000003">
    <property type="entry name" value="Serine hydroxymethyltransferase"/>
    <property type="match status" value="1"/>
</dbReference>
<dbReference type="Gene3D" id="3.90.1150.10">
    <property type="entry name" value="Aspartate Aminotransferase, domain 1"/>
    <property type="match status" value="1"/>
</dbReference>
<dbReference type="Gene3D" id="3.40.640.10">
    <property type="entry name" value="Type I PLP-dependent aspartate aminotransferase-like (Major domain)"/>
    <property type="match status" value="1"/>
</dbReference>
<dbReference type="HAMAP" id="MF_00051">
    <property type="entry name" value="SHMT"/>
    <property type="match status" value="1"/>
</dbReference>
<dbReference type="InterPro" id="IPR015424">
    <property type="entry name" value="PyrdxlP-dep_Trfase"/>
</dbReference>
<dbReference type="InterPro" id="IPR015421">
    <property type="entry name" value="PyrdxlP-dep_Trfase_major"/>
</dbReference>
<dbReference type="InterPro" id="IPR015422">
    <property type="entry name" value="PyrdxlP-dep_Trfase_small"/>
</dbReference>
<dbReference type="InterPro" id="IPR001085">
    <property type="entry name" value="Ser_HO-MeTrfase"/>
</dbReference>
<dbReference type="InterPro" id="IPR049943">
    <property type="entry name" value="Ser_HO-MeTrfase-like"/>
</dbReference>
<dbReference type="InterPro" id="IPR019798">
    <property type="entry name" value="Ser_HO-MeTrfase_PLP_BS"/>
</dbReference>
<dbReference type="InterPro" id="IPR039429">
    <property type="entry name" value="SHMT-like_dom"/>
</dbReference>
<dbReference type="NCBIfam" id="NF000586">
    <property type="entry name" value="PRK00011.1"/>
    <property type="match status" value="1"/>
</dbReference>
<dbReference type="PANTHER" id="PTHR11680">
    <property type="entry name" value="SERINE HYDROXYMETHYLTRANSFERASE"/>
    <property type="match status" value="1"/>
</dbReference>
<dbReference type="PANTHER" id="PTHR11680:SF35">
    <property type="entry name" value="SERINE HYDROXYMETHYLTRANSFERASE 1"/>
    <property type="match status" value="1"/>
</dbReference>
<dbReference type="Pfam" id="PF00464">
    <property type="entry name" value="SHMT"/>
    <property type="match status" value="1"/>
</dbReference>
<dbReference type="PIRSF" id="PIRSF000412">
    <property type="entry name" value="SHMT"/>
    <property type="match status" value="1"/>
</dbReference>
<dbReference type="SUPFAM" id="SSF53383">
    <property type="entry name" value="PLP-dependent transferases"/>
    <property type="match status" value="1"/>
</dbReference>
<dbReference type="PROSITE" id="PS00096">
    <property type="entry name" value="SHMT"/>
    <property type="match status" value="1"/>
</dbReference>
<reference key="1">
    <citation type="submission" date="2005-09" db="EMBL/GenBank/DDBJ databases">
        <title>Complete genome sequence of Clostridium kluyveri and comparative genomics of Clostridia species.</title>
        <authorList>
            <person name="Inui M."/>
            <person name="Nonaka H."/>
            <person name="Shinoda Y."/>
            <person name="Ikenaga Y."/>
            <person name="Abe M."/>
            <person name="Naito K."/>
            <person name="Vertes A.A."/>
            <person name="Yukawa H."/>
        </authorList>
    </citation>
    <scope>NUCLEOTIDE SEQUENCE [LARGE SCALE GENOMIC DNA]</scope>
    <source>
        <strain>NBRC 12016</strain>
    </source>
</reference>
<accession>B9E156</accession>
<keyword id="KW-0028">Amino-acid biosynthesis</keyword>
<keyword id="KW-0963">Cytoplasm</keyword>
<keyword id="KW-0554">One-carbon metabolism</keyword>
<keyword id="KW-0663">Pyridoxal phosphate</keyword>
<keyword id="KW-0808">Transferase</keyword>
<proteinExistence type="inferred from homology"/>
<feature type="chain" id="PRO_1000195440" description="Serine hydroxymethyltransferase">
    <location>
        <begin position="1"/>
        <end position="411"/>
    </location>
</feature>
<feature type="binding site" evidence="1">
    <location>
        <position position="119"/>
    </location>
    <ligand>
        <name>(6S)-5,6,7,8-tetrahydrofolate</name>
        <dbReference type="ChEBI" id="CHEBI:57453"/>
    </ligand>
</feature>
<feature type="binding site" evidence="1">
    <location>
        <begin position="123"/>
        <end position="125"/>
    </location>
    <ligand>
        <name>(6S)-5,6,7,8-tetrahydrofolate</name>
        <dbReference type="ChEBI" id="CHEBI:57453"/>
    </ligand>
</feature>
<feature type="site" description="Plays an important role in substrate specificity" evidence="1">
    <location>
        <position position="227"/>
    </location>
</feature>
<feature type="modified residue" description="N6-(pyridoxal phosphate)lysine" evidence="1">
    <location>
        <position position="228"/>
    </location>
</feature>
<evidence type="ECO:0000255" key="1">
    <source>
        <dbReference type="HAMAP-Rule" id="MF_00051"/>
    </source>
</evidence>
<gene>
    <name evidence="1" type="primary">glyA</name>
    <name type="ordered locus">CKR_1180</name>
</gene>
<protein>
    <recommendedName>
        <fullName evidence="1">Serine hydroxymethyltransferase</fullName>
        <shortName evidence="1">SHMT</shortName>
        <shortName evidence="1">Serine methylase</shortName>
        <ecNumber evidence="1">2.1.2.1</ecNumber>
    </recommendedName>
</protein>
<comment type="function">
    <text evidence="1">Catalyzes the reversible interconversion of serine and glycine with tetrahydrofolate (THF) serving as the one-carbon carrier. This reaction serves as the major source of one-carbon groups required for the biosynthesis of purines, thymidylate, methionine, and other important biomolecules. Also exhibits THF-independent aldolase activity toward beta-hydroxyamino acids, producing glycine and aldehydes, via a retro-aldol mechanism.</text>
</comment>
<comment type="catalytic activity">
    <reaction evidence="1">
        <text>(6R)-5,10-methylene-5,6,7,8-tetrahydrofolate + glycine + H2O = (6S)-5,6,7,8-tetrahydrofolate + L-serine</text>
        <dbReference type="Rhea" id="RHEA:15481"/>
        <dbReference type="ChEBI" id="CHEBI:15377"/>
        <dbReference type="ChEBI" id="CHEBI:15636"/>
        <dbReference type="ChEBI" id="CHEBI:33384"/>
        <dbReference type="ChEBI" id="CHEBI:57305"/>
        <dbReference type="ChEBI" id="CHEBI:57453"/>
        <dbReference type="EC" id="2.1.2.1"/>
    </reaction>
</comment>
<comment type="cofactor">
    <cofactor evidence="1">
        <name>pyridoxal 5'-phosphate</name>
        <dbReference type="ChEBI" id="CHEBI:597326"/>
    </cofactor>
</comment>
<comment type="pathway">
    <text evidence="1">One-carbon metabolism; tetrahydrofolate interconversion.</text>
</comment>
<comment type="pathway">
    <text evidence="1">Amino-acid biosynthesis; glycine biosynthesis; glycine from L-serine: step 1/1.</text>
</comment>
<comment type="subunit">
    <text evidence="1">Homodimer.</text>
</comment>
<comment type="subcellular location">
    <subcellularLocation>
        <location evidence="1">Cytoplasm</location>
    </subcellularLocation>
</comment>
<comment type="similarity">
    <text evidence="1">Belongs to the SHMT family.</text>
</comment>
<organism>
    <name type="scientific">Clostridium kluyveri (strain NBRC 12016)</name>
    <dbReference type="NCBI Taxonomy" id="583346"/>
    <lineage>
        <taxon>Bacteria</taxon>
        <taxon>Bacillati</taxon>
        <taxon>Bacillota</taxon>
        <taxon>Clostridia</taxon>
        <taxon>Eubacteriales</taxon>
        <taxon>Clostridiaceae</taxon>
        <taxon>Clostridium</taxon>
    </lineage>
</organism>
<name>GLYA_CLOK1</name>
<sequence>MDFNELKNTDKDIYGIIEEEWERQKNGIELIASENFTSKSVMEAMGSFLTNKYAEGYPGKRYYGGCYIVDKAEDLARDRMKKLFNAEHVNVQPHSGSQANMAVYMSVLKPGDTVLGMSLNHGGHLTHGSKVSFSGKLYNFVSYGLNSDTEIIDYDEMRELALKHKPKMIVSGASAYPRKIDFKKIREICDEVGAYMMVDMAHIAGIIAAGRHESPVPYADFVTTTTHKTLRGPRGGAIICKEKYGAALDKTIFPGIQGGPLMHIIAAKAVCFGEALKDEYKEYIDQIIKNAKVFGEELVKYGFRLVSGGTDNHLLLVDLTNKNITGKDLEELLDKVNITVNKNAIPFDKLKPNVTSGIRVGTPAVTTRGFKEEEMKKVAYFINKAVENREGDLSAIKREVIELCEAFPLYE</sequence>